<keyword id="KW-0963">Cytoplasm</keyword>
<keyword id="KW-0456">Lyase</keyword>
<keyword id="KW-0704">Schiff base</keyword>
<name>DEOC_SERP5</name>
<dbReference type="EC" id="4.1.2.4" evidence="1"/>
<dbReference type="EMBL" id="CP000826">
    <property type="protein sequence ID" value="ABV39766.1"/>
    <property type="molecule type" value="Genomic_DNA"/>
</dbReference>
<dbReference type="SMR" id="A8G9H6"/>
<dbReference type="STRING" id="399741.Spro_0660"/>
<dbReference type="KEGG" id="spe:Spro_0660"/>
<dbReference type="eggNOG" id="COG0274">
    <property type="taxonomic scope" value="Bacteria"/>
</dbReference>
<dbReference type="HOGENOM" id="CLU_053595_3_1_6"/>
<dbReference type="OrthoDB" id="6579831at2"/>
<dbReference type="UniPathway" id="UPA00002">
    <property type="reaction ID" value="UER00468"/>
</dbReference>
<dbReference type="GO" id="GO:0005737">
    <property type="term" value="C:cytoplasm"/>
    <property type="evidence" value="ECO:0007669"/>
    <property type="project" value="UniProtKB-SubCell"/>
</dbReference>
<dbReference type="GO" id="GO:0004139">
    <property type="term" value="F:deoxyribose-phosphate aldolase activity"/>
    <property type="evidence" value="ECO:0007669"/>
    <property type="project" value="UniProtKB-UniRule"/>
</dbReference>
<dbReference type="GO" id="GO:0006018">
    <property type="term" value="P:2-deoxyribose 1-phosphate catabolic process"/>
    <property type="evidence" value="ECO:0007669"/>
    <property type="project" value="UniProtKB-UniRule"/>
</dbReference>
<dbReference type="GO" id="GO:0016052">
    <property type="term" value="P:carbohydrate catabolic process"/>
    <property type="evidence" value="ECO:0007669"/>
    <property type="project" value="TreeGrafter"/>
</dbReference>
<dbReference type="GO" id="GO:0009264">
    <property type="term" value="P:deoxyribonucleotide catabolic process"/>
    <property type="evidence" value="ECO:0007669"/>
    <property type="project" value="InterPro"/>
</dbReference>
<dbReference type="CDD" id="cd00959">
    <property type="entry name" value="DeoC"/>
    <property type="match status" value="1"/>
</dbReference>
<dbReference type="FunFam" id="3.20.20.70:FF:000034">
    <property type="entry name" value="Deoxyribose-phosphate aldolase"/>
    <property type="match status" value="1"/>
</dbReference>
<dbReference type="Gene3D" id="3.20.20.70">
    <property type="entry name" value="Aldolase class I"/>
    <property type="match status" value="1"/>
</dbReference>
<dbReference type="HAMAP" id="MF_00592">
    <property type="entry name" value="DeoC_type2"/>
    <property type="match status" value="1"/>
</dbReference>
<dbReference type="InterPro" id="IPR013785">
    <property type="entry name" value="Aldolase_TIM"/>
</dbReference>
<dbReference type="InterPro" id="IPR011343">
    <property type="entry name" value="DeoC"/>
</dbReference>
<dbReference type="InterPro" id="IPR002915">
    <property type="entry name" value="DeoC/FbaB/LacD_aldolase"/>
</dbReference>
<dbReference type="InterPro" id="IPR023649">
    <property type="entry name" value="DeoC_typeII"/>
</dbReference>
<dbReference type="NCBIfam" id="TIGR00126">
    <property type="entry name" value="deoC"/>
    <property type="match status" value="1"/>
</dbReference>
<dbReference type="PANTHER" id="PTHR10889">
    <property type="entry name" value="DEOXYRIBOSE-PHOSPHATE ALDOLASE"/>
    <property type="match status" value="1"/>
</dbReference>
<dbReference type="PANTHER" id="PTHR10889:SF3">
    <property type="entry name" value="DEOXYRIBOSE-PHOSPHATE ALDOLASE"/>
    <property type="match status" value="1"/>
</dbReference>
<dbReference type="Pfam" id="PF01791">
    <property type="entry name" value="DeoC"/>
    <property type="match status" value="1"/>
</dbReference>
<dbReference type="PIRSF" id="PIRSF001357">
    <property type="entry name" value="DeoC"/>
    <property type="match status" value="1"/>
</dbReference>
<dbReference type="SMART" id="SM01133">
    <property type="entry name" value="DeoC"/>
    <property type="match status" value="1"/>
</dbReference>
<dbReference type="SUPFAM" id="SSF51569">
    <property type="entry name" value="Aldolase"/>
    <property type="match status" value="1"/>
</dbReference>
<comment type="function">
    <text evidence="1">Catalyzes a reversible aldol reaction between acetaldehyde and D-glyceraldehyde 3-phosphate to generate 2-deoxy-D-ribose 5-phosphate.</text>
</comment>
<comment type="catalytic activity">
    <reaction evidence="1">
        <text>2-deoxy-D-ribose 5-phosphate = D-glyceraldehyde 3-phosphate + acetaldehyde</text>
        <dbReference type="Rhea" id="RHEA:12821"/>
        <dbReference type="ChEBI" id="CHEBI:15343"/>
        <dbReference type="ChEBI" id="CHEBI:59776"/>
        <dbReference type="ChEBI" id="CHEBI:62877"/>
        <dbReference type="EC" id="4.1.2.4"/>
    </reaction>
</comment>
<comment type="pathway">
    <text evidence="1">Carbohydrate degradation; 2-deoxy-D-ribose 1-phosphate degradation; D-glyceraldehyde 3-phosphate and acetaldehyde from 2-deoxy-alpha-D-ribose 1-phosphate: step 2/2.</text>
</comment>
<comment type="subcellular location">
    <subcellularLocation>
        <location evidence="1">Cytoplasm</location>
    </subcellularLocation>
</comment>
<comment type="similarity">
    <text evidence="1">Belongs to the DeoC/FbaB aldolase family. DeoC type 2 subfamily.</text>
</comment>
<protein>
    <recommendedName>
        <fullName evidence="1">Deoxyribose-phosphate aldolase</fullName>
        <shortName evidence="1">DERA</shortName>
        <ecNumber evidence="1">4.1.2.4</ecNumber>
    </recommendedName>
    <alternativeName>
        <fullName evidence="1">2-deoxy-D-ribose 5-phosphate aldolase</fullName>
    </alternativeName>
    <alternativeName>
        <fullName evidence="1">Phosphodeoxyriboaldolase</fullName>
        <shortName evidence="1">Deoxyriboaldolase</shortName>
    </alternativeName>
</protein>
<feature type="chain" id="PRO_1000072601" description="Deoxyribose-phosphate aldolase">
    <location>
        <begin position="1"/>
        <end position="259"/>
    </location>
</feature>
<feature type="active site" description="Proton donor/acceptor" evidence="1">
    <location>
        <position position="102"/>
    </location>
</feature>
<feature type="active site" description="Schiff-base intermediate with acetaldehyde" evidence="1">
    <location>
        <position position="167"/>
    </location>
</feature>
<feature type="active site" description="Proton donor/acceptor" evidence="1">
    <location>
        <position position="201"/>
    </location>
</feature>
<evidence type="ECO:0000255" key="1">
    <source>
        <dbReference type="HAMAP-Rule" id="MF_00592"/>
    </source>
</evidence>
<organism>
    <name type="scientific">Serratia proteamaculans (strain 568)</name>
    <dbReference type="NCBI Taxonomy" id="399741"/>
    <lineage>
        <taxon>Bacteria</taxon>
        <taxon>Pseudomonadati</taxon>
        <taxon>Pseudomonadota</taxon>
        <taxon>Gammaproteobacteria</taxon>
        <taxon>Enterobacterales</taxon>
        <taxon>Yersiniaceae</taxon>
        <taxon>Serratia</taxon>
    </lineage>
</organism>
<reference key="1">
    <citation type="submission" date="2007-09" db="EMBL/GenBank/DDBJ databases">
        <title>Complete sequence of chromosome of Serratia proteamaculans 568.</title>
        <authorList>
            <consortium name="US DOE Joint Genome Institute"/>
            <person name="Copeland A."/>
            <person name="Lucas S."/>
            <person name="Lapidus A."/>
            <person name="Barry K."/>
            <person name="Glavina del Rio T."/>
            <person name="Dalin E."/>
            <person name="Tice H."/>
            <person name="Pitluck S."/>
            <person name="Chain P."/>
            <person name="Malfatti S."/>
            <person name="Shin M."/>
            <person name="Vergez L."/>
            <person name="Schmutz J."/>
            <person name="Larimer F."/>
            <person name="Land M."/>
            <person name="Hauser L."/>
            <person name="Kyrpides N."/>
            <person name="Kim E."/>
            <person name="Taghavi S."/>
            <person name="Newman L."/>
            <person name="Vangronsveld J."/>
            <person name="van der Lelie D."/>
            <person name="Richardson P."/>
        </authorList>
    </citation>
    <scope>NUCLEOTIDE SEQUENCE [LARGE SCALE GENOMIC DNA]</scope>
    <source>
        <strain>568</strain>
    </source>
</reference>
<gene>
    <name evidence="1" type="primary">deoC</name>
    <name type="ordered locus">Spro_0660</name>
</gene>
<proteinExistence type="inferred from homology"/>
<accession>A8G9H6</accession>
<sequence>MTELTAAAQRALTLMDLTTLNDDDTDEKVIALCRQANSPAGHTAAICIYPRFIPAARKALREQGTPDIRIATVTNFPHGNDDIEIALAETRAAIAYGADEVDVVFPYRALIAGNEQVGFELVKQCKQACLAANVLLKVIIETGELKQANLIRKASEIAINAGADFIKTSTGKVPVNATLESAELMMSVIRDMGVAKTVGFKPAGGVRTAEDALHYLQLADRILGEGWADARHFRFGASSLLASLLATLGHGAEPSGSGY</sequence>